<evidence type="ECO:0000250" key="1">
    <source>
        <dbReference type="UniProtKB" id="P34405"/>
    </source>
</evidence>
<evidence type="ECO:0000255" key="2"/>
<evidence type="ECO:0000269" key="3">
    <source>
    </source>
</evidence>
<evidence type="ECO:0000303" key="4">
    <source>
    </source>
</evidence>
<evidence type="ECO:0000305" key="5"/>
<evidence type="ECO:0000305" key="6">
    <source>
    </source>
</evidence>
<name>FAR9_NAMOO</name>
<dbReference type="GO" id="GO:0005576">
    <property type="term" value="C:extracellular region"/>
    <property type="evidence" value="ECO:0007669"/>
    <property type="project" value="UniProtKB-SubCell"/>
</dbReference>
<dbReference type="GO" id="GO:0007218">
    <property type="term" value="P:neuropeptide signaling pathway"/>
    <property type="evidence" value="ECO:0007669"/>
    <property type="project" value="UniProtKB-KW"/>
</dbReference>
<feature type="peptide" id="PRO_0000420504" description="Extended FMRFamide-9" evidence="3">
    <location>
        <begin position="1"/>
        <end position="11"/>
    </location>
</feature>
<feature type="modified residue" description="Leucine amide" evidence="3">
    <location>
        <position position="11"/>
    </location>
</feature>
<feature type="unsure residue" description="L or I" evidence="3">
    <location>
        <position position="11"/>
    </location>
</feature>
<reference evidence="5" key="1">
    <citation type="journal article" date="2012" name="Syst. Biol.">
        <title>Peptidomics-based phylogeny and biogeography of Mantophasmatodea (Hexapoda).</title>
        <authorList>
            <person name="Predel R."/>
            <person name="Neupert S."/>
            <person name="Huetteroth W."/>
            <person name="Kahnt J."/>
            <person name="Waidelich D."/>
            <person name="Roth S."/>
        </authorList>
    </citation>
    <scope>PROTEIN SEQUENCE</scope>
    <scope>AMIDATION AT LEU-11</scope>
    <source>
        <tissue evidence="3">Thoracic perisympathetic organs</tissue>
    </source>
</reference>
<proteinExistence type="evidence at protein level"/>
<sequence length="11" mass="1149">GRGGASNYVRL</sequence>
<accession>B0M2T9</accession>
<organism>
    <name type="scientific">Namaquaphasma ookiepense</name>
    <name type="common">Gladiator bug</name>
    <dbReference type="NCBI Taxonomy" id="409167"/>
    <lineage>
        <taxon>Eukaryota</taxon>
        <taxon>Metazoa</taxon>
        <taxon>Ecdysozoa</taxon>
        <taxon>Arthropoda</taxon>
        <taxon>Hexapoda</taxon>
        <taxon>Insecta</taxon>
        <taxon>Pterygota</taxon>
        <taxon>Neoptera</taxon>
        <taxon>Polyneoptera</taxon>
        <taxon>Mantophasmatodea</taxon>
        <taxon>Austrophasmatidae</taxon>
        <taxon>Namaquaphasma</taxon>
    </lineage>
</organism>
<comment type="function">
    <text evidence="1">FMRFamides and FMRFamide-like peptides are neuropeptides.</text>
</comment>
<comment type="subcellular location">
    <subcellularLocation>
        <location evidence="6">Secreted</location>
    </subcellularLocation>
</comment>
<comment type="similarity">
    <text evidence="2">Belongs to the FARP (FMRF amide related peptide) family.</text>
</comment>
<protein>
    <recommendedName>
        <fullName evidence="4">Extended FMRFamide-9</fullName>
        <shortName evidence="4">FMRFa-9</shortName>
    </recommendedName>
</protein>
<keyword id="KW-0027">Amidation</keyword>
<keyword id="KW-0903">Direct protein sequencing</keyword>
<keyword id="KW-0527">Neuropeptide</keyword>
<keyword id="KW-0964">Secreted</keyword>